<proteinExistence type="inferred from homology"/>
<reference key="1">
    <citation type="journal article" date="2009" name="PLoS Pathog.">
        <title>Genomic evidence for the evolution of Streptococcus equi: host restriction, increased virulence, and genetic exchange with human pathogens.</title>
        <authorList>
            <person name="Holden M.T.G."/>
            <person name="Heather Z."/>
            <person name="Paillot R."/>
            <person name="Steward K.F."/>
            <person name="Webb K."/>
            <person name="Ainslie F."/>
            <person name="Jourdan T."/>
            <person name="Bason N.C."/>
            <person name="Holroyd N.E."/>
            <person name="Mungall K."/>
            <person name="Quail M.A."/>
            <person name="Sanders M."/>
            <person name="Simmonds M."/>
            <person name="Willey D."/>
            <person name="Brooks K."/>
            <person name="Aanensen D.M."/>
            <person name="Spratt B.G."/>
            <person name="Jolley K.A."/>
            <person name="Maiden M.C.J."/>
            <person name="Kehoe M."/>
            <person name="Chanter N."/>
            <person name="Bentley S.D."/>
            <person name="Robinson C."/>
            <person name="Maskell D.J."/>
            <person name="Parkhill J."/>
            <person name="Waller A.S."/>
        </authorList>
    </citation>
    <scope>NUCLEOTIDE SEQUENCE [LARGE SCALE GENOMIC DNA]</scope>
    <source>
        <strain>H70</strain>
    </source>
</reference>
<sequence length="610" mass="68016">MNSQELKKRQENIRNFSIIAHIDHGKSTLADRILEKTETVSSREMQAQLLDSMDLERERGITIKLNAIELNYKAKNGQTYIFHLIDTPGHVDFTYEVSRSLAACEGAVLVVDAAQGIEAQTLANVYLALDNDLEILPVINKIDLPAADPERVRQEIEDVIGLDASEAVLASAKSGIGIEDILEQIVEKVPAPSGDVDQPLQALIFDSVYDAYRGVILQVRVVNGMVKPGDTIQMMSNGKTFDVTEVGIFTPKAIGRNFLATGDVGYIAASIKTVADTRVGDTVTLATNPAAEPLHGYKQMNPMVFAGIYPIESNKYNDLREALEKLQLNDASLQFEPETSQALGFGFRCGFLGLLHMDVIQERLEREFNIDLIMTAPSVVYHVNTTDGDMLEVSNPSEFPDPTKVDSIEEPYVKAQIMVPQEFVGAVMELAQRKRGDFVTMDYIDDNRVNVIYHIPLAEIVFDFFDKLKSSTRGYASFDYEIAEYRRSQLVKMDILLNGDKVDALSFIVHRAFAYERGKLIVEKLKKIIPRQQFEVPIQAAIGQKIVARSDIKALRKNVLAKCYGGDVSRKRKLLEKQKAGKKRMKAIGSVEVPQEAFLSVLSMDDESKK</sequence>
<gene>
    <name evidence="1" type="primary">lepA</name>
    <name type="ordered locus">SZO_07820</name>
</gene>
<evidence type="ECO:0000255" key="1">
    <source>
        <dbReference type="HAMAP-Rule" id="MF_00071"/>
    </source>
</evidence>
<comment type="function">
    <text evidence="1">Required for accurate and efficient protein synthesis under certain stress conditions. May act as a fidelity factor of the translation reaction, by catalyzing a one-codon backward translocation of tRNAs on improperly translocated ribosomes. Back-translocation proceeds from a post-translocation (POST) complex to a pre-translocation (PRE) complex, thus giving elongation factor G a second chance to translocate the tRNAs correctly. Binds to ribosomes in a GTP-dependent manner.</text>
</comment>
<comment type="catalytic activity">
    <reaction evidence="1">
        <text>GTP + H2O = GDP + phosphate + H(+)</text>
        <dbReference type="Rhea" id="RHEA:19669"/>
        <dbReference type="ChEBI" id="CHEBI:15377"/>
        <dbReference type="ChEBI" id="CHEBI:15378"/>
        <dbReference type="ChEBI" id="CHEBI:37565"/>
        <dbReference type="ChEBI" id="CHEBI:43474"/>
        <dbReference type="ChEBI" id="CHEBI:58189"/>
        <dbReference type="EC" id="3.6.5.n1"/>
    </reaction>
</comment>
<comment type="subcellular location">
    <subcellularLocation>
        <location evidence="1">Cell membrane</location>
        <topology evidence="1">Peripheral membrane protein</topology>
        <orientation evidence="1">Cytoplasmic side</orientation>
    </subcellularLocation>
</comment>
<comment type="similarity">
    <text evidence="1">Belongs to the TRAFAC class translation factor GTPase superfamily. Classic translation factor GTPase family. LepA subfamily.</text>
</comment>
<protein>
    <recommendedName>
        <fullName evidence="1">Elongation factor 4</fullName>
        <shortName evidence="1">EF-4</shortName>
        <ecNumber evidence="1">3.6.5.n1</ecNumber>
    </recommendedName>
    <alternativeName>
        <fullName evidence="1">Ribosomal back-translocase LepA</fullName>
    </alternativeName>
</protein>
<dbReference type="EC" id="3.6.5.n1" evidence="1"/>
<dbReference type="EMBL" id="FM204884">
    <property type="protein sequence ID" value="CAW98935.1"/>
    <property type="molecule type" value="Genomic_DNA"/>
</dbReference>
<dbReference type="SMR" id="C0MDV7"/>
<dbReference type="KEGG" id="seq:SZO_07820"/>
<dbReference type="eggNOG" id="COG0481">
    <property type="taxonomic scope" value="Bacteria"/>
</dbReference>
<dbReference type="HOGENOM" id="CLU_009995_3_3_9"/>
<dbReference type="Proteomes" id="UP000001368">
    <property type="component" value="Chromosome"/>
</dbReference>
<dbReference type="GO" id="GO:0005886">
    <property type="term" value="C:plasma membrane"/>
    <property type="evidence" value="ECO:0007669"/>
    <property type="project" value="UniProtKB-SubCell"/>
</dbReference>
<dbReference type="GO" id="GO:0005525">
    <property type="term" value="F:GTP binding"/>
    <property type="evidence" value="ECO:0007669"/>
    <property type="project" value="UniProtKB-UniRule"/>
</dbReference>
<dbReference type="GO" id="GO:0003924">
    <property type="term" value="F:GTPase activity"/>
    <property type="evidence" value="ECO:0007669"/>
    <property type="project" value="UniProtKB-UniRule"/>
</dbReference>
<dbReference type="GO" id="GO:0043022">
    <property type="term" value="F:ribosome binding"/>
    <property type="evidence" value="ECO:0007669"/>
    <property type="project" value="UniProtKB-UniRule"/>
</dbReference>
<dbReference type="GO" id="GO:0003746">
    <property type="term" value="F:translation elongation factor activity"/>
    <property type="evidence" value="ECO:0007669"/>
    <property type="project" value="UniProtKB-UniRule"/>
</dbReference>
<dbReference type="GO" id="GO:0045727">
    <property type="term" value="P:positive regulation of translation"/>
    <property type="evidence" value="ECO:0007669"/>
    <property type="project" value="UniProtKB-UniRule"/>
</dbReference>
<dbReference type="CDD" id="cd03699">
    <property type="entry name" value="EF4_II"/>
    <property type="match status" value="1"/>
</dbReference>
<dbReference type="CDD" id="cd16260">
    <property type="entry name" value="EF4_III"/>
    <property type="match status" value="1"/>
</dbReference>
<dbReference type="CDD" id="cd01890">
    <property type="entry name" value="LepA"/>
    <property type="match status" value="1"/>
</dbReference>
<dbReference type="CDD" id="cd03709">
    <property type="entry name" value="lepA_C"/>
    <property type="match status" value="1"/>
</dbReference>
<dbReference type="FunFam" id="3.40.50.300:FF:000078">
    <property type="entry name" value="Elongation factor 4"/>
    <property type="match status" value="1"/>
</dbReference>
<dbReference type="FunFam" id="2.40.30.10:FF:000015">
    <property type="entry name" value="Translation factor GUF1, mitochondrial"/>
    <property type="match status" value="1"/>
</dbReference>
<dbReference type="FunFam" id="3.30.70.240:FF:000007">
    <property type="entry name" value="Translation factor GUF1, mitochondrial"/>
    <property type="match status" value="1"/>
</dbReference>
<dbReference type="FunFam" id="3.30.70.2570:FF:000001">
    <property type="entry name" value="Translation factor GUF1, mitochondrial"/>
    <property type="match status" value="1"/>
</dbReference>
<dbReference type="FunFam" id="3.30.70.870:FF:000004">
    <property type="entry name" value="Translation factor GUF1, mitochondrial"/>
    <property type="match status" value="1"/>
</dbReference>
<dbReference type="Gene3D" id="3.30.70.240">
    <property type="match status" value="1"/>
</dbReference>
<dbReference type="Gene3D" id="3.30.70.2570">
    <property type="entry name" value="Elongation factor 4, C-terminal domain"/>
    <property type="match status" value="1"/>
</dbReference>
<dbReference type="Gene3D" id="3.30.70.870">
    <property type="entry name" value="Elongation Factor G (Translational Gtpase), domain 3"/>
    <property type="match status" value="1"/>
</dbReference>
<dbReference type="Gene3D" id="3.40.50.300">
    <property type="entry name" value="P-loop containing nucleotide triphosphate hydrolases"/>
    <property type="match status" value="1"/>
</dbReference>
<dbReference type="Gene3D" id="2.40.30.10">
    <property type="entry name" value="Translation factors"/>
    <property type="match status" value="1"/>
</dbReference>
<dbReference type="HAMAP" id="MF_00071">
    <property type="entry name" value="LepA"/>
    <property type="match status" value="1"/>
</dbReference>
<dbReference type="InterPro" id="IPR006297">
    <property type="entry name" value="EF-4"/>
</dbReference>
<dbReference type="InterPro" id="IPR041095">
    <property type="entry name" value="EFG_II"/>
</dbReference>
<dbReference type="InterPro" id="IPR035647">
    <property type="entry name" value="EFG_III/V"/>
</dbReference>
<dbReference type="InterPro" id="IPR000640">
    <property type="entry name" value="EFG_V-like"/>
</dbReference>
<dbReference type="InterPro" id="IPR004161">
    <property type="entry name" value="EFTu-like_2"/>
</dbReference>
<dbReference type="InterPro" id="IPR031157">
    <property type="entry name" value="G_TR_CS"/>
</dbReference>
<dbReference type="InterPro" id="IPR038363">
    <property type="entry name" value="LepA_C_sf"/>
</dbReference>
<dbReference type="InterPro" id="IPR013842">
    <property type="entry name" value="LepA_CTD"/>
</dbReference>
<dbReference type="InterPro" id="IPR035654">
    <property type="entry name" value="LepA_IV"/>
</dbReference>
<dbReference type="InterPro" id="IPR027417">
    <property type="entry name" value="P-loop_NTPase"/>
</dbReference>
<dbReference type="InterPro" id="IPR005225">
    <property type="entry name" value="Small_GTP-bd"/>
</dbReference>
<dbReference type="InterPro" id="IPR000795">
    <property type="entry name" value="T_Tr_GTP-bd_dom"/>
</dbReference>
<dbReference type="InterPro" id="IPR009000">
    <property type="entry name" value="Transl_B-barrel_sf"/>
</dbReference>
<dbReference type="NCBIfam" id="TIGR01393">
    <property type="entry name" value="lepA"/>
    <property type="match status" value="1"/>
</dbReference>
<dbReference type="NCBIfam" id="TIGR00231">
    <property type="entry name" value="small_GTP"/>
    <property type="match status" value="1"/>
</dbReference>
<dbReference type="PANTHER" id="PTHR43512:SF4">
    <property type="entry name" value="TRANSLATION FACTOR GUF1 HOMOLOG, CHLOROPLASTIC"/>
    <property type="match status" value="1"/>
</dbReference>
<dbReference type="PANTHER" id="PTHR43512">
    <property type="entry name" value="TRANSLATION FACTOR GUF1-RELATED"/>
    <property type="match status" value="1"/>
</dbReference>
<dbReference type="Pfam" id="PF00679">
    <property type="entry name" value="EFG_C"/>
    <property type="match status" value="1"/>
</dbReference>
<dbReference type="Pfam" id="PF14492">
    <property type="entry name" value="EFG_III"/>
    <property type="match status" value="1"/>
</dbReference>
<dbReference type="Pfam" id="PF00009">
    <property type="entry name" value="GTP_EFTU"/>
    <property type="match status" value="1"/>
</dbReference>
<dbReference type="Pfam" id="PF03144">
    <property type="entry name" value="GTP_EFTU_D2"/>
    <property type="match status" value="1"/>
</dbReference>
<dbReference type="Pfam" id="PF06421">
    <property type="entry name" value="LepA_C"/>
    <property type="match status" value="1"/>
</dbReference>
<dbReference type="PRINTS" id="PR00315">
    <property type="entry name" value="ELONGATNFCT"/>
</dbReference>
<dbReference type="SMART" id="SM00838">
    <property type="entry name" value="EFG_C"/>
    <property type="match status" value="1"/>
</dbReference>
<dbReference type="SUPFAM" id="SSF54980">
    <property type="entry name" value="EF-G C-terminal domain-like"/>
    <property type="match status" value="2"/>
</dbReference>
<dbReference type="SUPFAM" id="SSF52540">
    <property type="entry name" value="P-loop containing nucleoside triphosphate hydrolases"/>
    <property type="match status" value="1"/>
</dbReference>
<dbReference type="SUPFAM" id="SSF50447">
    <property type="entry name" value="Translation proteins"/>
    <property type="match status" value="1"/>
</dbReference>
<dbReference type="PROSITE" id="PS00301">
    <property type="entry name" value="G_TR_1"/>
    <property type="match status" value="1"/>
</dbReference>
<dbReference type="PROSITE" id="PS51722">
    <property type="entry name" value="G_TR_2"/>
    <property type="match status" value="1"/>
</dbReference>
<feature type="chain" id="PRO_1000202460" description="Elongation factor 4">
    <location>
        <begin position="1"/>
        <end position="610"/>
    </location>
</feature>
<feature type="domain" description="tr-type G">
    <location>
        <begin position="11"/>
        <end position="193"/>
    </location>
</feature>
<feature type="binding site" evidence="1">
    <location>
        <begin position="23"/>
        <end position="28"/>
    </location>
    <ligand>
        <name>GTP</name>
        <dbReference type="ChEBI" id="CHEBI:37565"/>
    </ligand>
</feature>
<feature type="binding site" evidence="1">
    <location>
        <begin position="140"/>
        <end position="143"/>
    </location>
    <ligand>
        <name>GTP</name>
        <dbReference type="ChEBI" id="CHEBI:37565"/>
    </ligand>
</feature>
<organism>
    <name type="scientific">Streptococcus equi subsp. zooepidemicus (strain H70)</name>
    <dbReference type="NCBI Taxonomy" id="553483"/>
    <lineage>
        <taxon>Bacteria</taxon>
        <taxon>Bacillati</taxon>
        <taxon>Bacillota</taxon>
        <taxon>Bacilli</taxon>
        <taxon>Lactobacillales</taxon>
        <taxon>Streptococcaceae</taxon>
        <taxon>Streptococcus</taxon>
    </lineage>
</organism>
<keyword id="KW-1003">Cell membrane</keyword>
<keyword id="KW-0342">GTP-binding</keyword>
<keyword id="KW-0378">Hydrolase</keyword>
<keyword id="KW-0472">Membrane</keyword>
<keyword id="KW-0547">Nucleotide-binding</keyword>
<keyword id="KW-0648">Protein biosynthesis</keyword>
<name>LEPA_STRS7</name>
<accession>C0MDV7</accession>